<organism>
    <name type="scientific">Halalkalibacterium halodurans (strain ATCC BAA-125 / DSM 18197 / FERM 7344 / JCM 9153 / C-125)</name>
    <name type="common">Bacillus halodurans</name>
    <dbReference type="NCBI Taxonomy" id="272558"/>
    <lineage>
        <taxon>Bacteria</taxon>
        <taxon>Bacillati</taxon>
        <taxon>Bacillota</taxon>
        <taxon>Bacilli</taxon>
        <taxon>Bacillales</taxon>
        <taxon>Bacillaceae</taxon>
        <taxon>Halalkalibacterium (ex Joshi et al. 2022)</taxon>
    </lineage>
</organism>
<accession>Q9KCM0</accession>
<sequence>MNYSLAVDIGASSGRLIVGECNKKIQLTEIHRFENQIIEKNGQFCWDVDALFSEIKTGLKKCREAGIEPVSMGIDTWAVDFVLLDEHDKPLTDAVSYRDPRTDGVMEEVIEQFMKERLYLETGIQFQQFNTIYQLYALKKQHPDIFKKAKSFLMIPDYFHFLLTGKKANEYTNATTTQLVNAFTKKWDKDIIEALGFNPDMFQEIKLPTESLGKLKSEWVEEVGFDLEVILPATHDTGSAVVAVPKVADTIYLSSGTWSLIGVENSFPICVTKALDYNFTNEGGMNYQFRFLKNIMGLWMIQEVRRNYDNRYSFAQLVELSKGISFKSTVDVNDPRFLKPTNMIKEIQRYCQETGQQAPELPGEVAKCVFESLAESYTSAVAEIEDIFEKDFKSINVIGGGCRNELLNQLIADRTKKDVFAGPIEATAIGNLVAQWMALGEIESIQQARKLIYDSFDVKRYVSADRE</sequence>
<proteinExistence type="inferred from homology"/>
<dbReference type="EC" id="2.7.1.5" evidence="1"/>
<dbReference type="EMBL" id="BA000004">
    <property type="protein sequence ID" value="BAB05270.1"/>
    <property type="molecule type" value="Genomic_DNA"/>
</dbReference>
<dbReference type="PIR" id="G83843">
    <property type="entry name" value="G83843"/>
</dbReference>
<dbReference type="RefSeq" id="WP_010897714.1">
    <property type="nucleotide sequence ID" value="NC_002570.2"/>
</dbReference>
<dbReference type="SMR" id="Q9KCM0"/>
<dbReference type="STRING" id="272558.gene:10727449"/>
<dbReference type="KEGG" id="bha:BH1551"/>
<dbReference type="eggNOG" id="COG1070">
    <property type="taxonomic scope" value="Bacteria"/>
</dbReference>
<dbReference type="HOGENOM" id="CLU_039395_0_1_9"/>
<dbReference type="OrthoDB" id="9761504at2"/>
<dbReference type="UniPathway" id="UPA00541">
    <property type="reaction ID" value="UER00602"/>
</dbReference>
<dbReference type="Proteomes" id="UP000001258">
    <property type="component" value="Chromosome"/>
</dbReference>
<dbReference type="GO" id="GO:0005829">
    <property type="term" value="C:cytosol"/>
    <property type="evidence" value="ECO:0007669"/>
    <property type="project" value="TreeGrafter"/>
</dbReference>
<dbReference type="GO" id="GO:0005524">
    <property type="term" value="F:ATP binding"/>
    <property type="evidence" value="ECO:0007669"/>
    <property type="project" value="UniProtKB-KW"/>
</dbReference>
<dbReference type="GO" id="GO:0004370">
    <property type="term" value="F:glycerol kinase activity"/>
    <property type="evidence" value="ECO:0007669"/>
    <property type="project" value="TreeGrafter"/>
</dbReference>
<dbReference type="GO" id="GO:0008993">
    <property type="term" value="F:rhamnulokinase activity"/>
    <property type="evidence" value="ECO:0007669"/>
    <property type="project" value="UniProtKB-UniRule"/>
</dbReference>
<dbReference type="GO" id="GO:0006071">
    <property type="term" value="P:glycerol metabolic process"/>
    <property type="evidence" value="ECO:0007669"/>
    <property type="project" value="TreeGrafter"/>
</dbReference>
<dbReference type="GO" id="GO:0019301">
    <property type="term" value="P:rhamnose catabolic process"/>
    <property type="evidence" value="ECO:0007669"/>
    <property type="project" value="UniProtKB-UniRule"/>
</dbReference>
<dbReference type="CDD" id="cd07771">
    <property type="entry name" value="ASKHA_NBD_FGGY_RhaB-like"/>
    <property type="match status" value="1"/>
</dbReference>
<dbReference type="Gene3D" id="3.30.420.40">
    <property type="match status" value="2"/>
</dbReference>
<dbReference type="HAMAP" id="MF_01535">
    <property type="entry name" value="Rhamnulokinase"/>
    <property type="match status" value="1"/>
</dbReference>
<dbReference type="InterPro" id="IPR043129">
    <property type="entry name" value="ATPase_NBD"/>
</dbReference>
<dbReference type="InterPro" id="IPR000577">
    <property type="entry name" value="Carb_kinase_FGGY"/>
</dbReference>
<dbReference type="InterPro" id="IPR018485">
    <property type="entry name" value="FGGY_C"/>
</dbReference>
<dbReference type="InterPro" id="IPR018484">
    <property type="entry name" value="FGGY_N"/>
</dbReference>
<dbReference type="InterPro" id="IPR013449">
    <property type="entry name" value="Rhamnulokinase"/>
</dbReference>
<dbReference type="NCBIfam" id="TIGR02627">
    <property type="entry name" value="rhamnulo_kin"/>
    <property type="match status" value="1"/>
</dbReference>
<dbReference type="PANTHER" id="PTHR10196:SF93">
    <property type="entry name" value="L-RHAMNULOKINASE"/>
    <property type="match status" value="1"/>
</dbReference>
<dbReference type="PANTHER" id="PTHR10196">
    <property type="entry name" value="SUGAR KINASE"/>
    <property type="match status" value="1"/>
</dbReference>
<dbReference type="Pfam" id="PF02782">
    <property type="entry name" value="FGGY_C"/>
    <property type="match status" value="1"/>
</dbReference>
<dbReference type="Pfam" id="PF00370">
    <property type="entry name" value="FGGY_N"/>
    <property type="match status" value="1"/>
</dbReference>
<dbReference type="PIRSF" id="PIRSF000538">
    <property type="entry name" value="GlpK"/>
    <property type="match status" value="1"/>
</dbReference>
<dbReference type="SUPFAM" id="SSF53067">
    <property type="entry name" value="Actin-like ATPase domain"/>
    <property type="match status" value="2"/>
</dbReference>
<protein>
    <recommendedName>
        <fullName evidence="1">Rhamnulokinase</fullName>
        <shortName evidence="1">RhaB</shortName>
        <ecNumber evidence="1">2.7.1.5</ecNumber>
    </recommendedName>
    <alternativeName>
        <fullName evidence="1">ATP:L-rhamnulose phosphotransferase</fullName>
    </alternativeName>
    <alternativeName>
        <fullName evidence="1">L-rhamnulose 1-kinase</fullName>
    </alternativeName>
    <alternativeName>
        <fullName evidence="1">Rhamnulose kinase</fullName>
    </alternativeName>
</protein>
<comment type="function">
    <text evidence="1">Involved in the catabolism of L-rhamnose (6-deoxy-L-mannose). Catalyzes the transfer of the gamma-phosphate group from ATP to the 1-hydroxyl group of L-rhamnulose to yield L-rhamnulose 1-phosphate.</text>
</comment>
<comment type="catalytic activity">
    <reaction evidence="1">
        <text>L-rhamnulose + ATP = L-rhamnulose 1-phosphate + ADP + H(+)</text>
        <dbReference type="Rhea" id="RHEA:20117"/>
        <dbReference type="ChEBI" id="CHEBI:15378"/>
        <dbReference type="ChEBI" id="CHEBI:17897"/>
        <dbReference type="ChEBI" id="CHEBI:30616"/>
        <dbReference type="ChEBI" id="CHEBI:58313"/>
        <dbReference type="ChEBI" id="CHEBI:456216"/>
        <dbReference type="EC" id="2.7.1.5"/>
    </reaction>
</comment>
<comment type="cofactor">
    <cofactor evidence="1">
        <name>Mg(2+)</name>
        <dbReference type="ChEBI" id="CHEBI:18420"/>
    </cofactor>
</comment>
<comment type="pathway">
    <text evidence="1">Carbohydrate degradation; L-rhamnose degradation; glycerone phosphate from L-rhamnose: step 2/3.</text>
</comment>
<comment type="similarity">
    <text evidence="1">Belongs to the rhamnulokinase family.</text>
</comment>
<reference key="1">
    <citation type="journal article" date="2000" name="Nucleic Acids Res.">
        <title>Complete genome sequence of the alkaliphilic bacterium Bacillus halodurans and genomic sequence comparison with Bacillus subtilis.</title>
        <authorList>
            <person name="Takami H."/>
            <person name="Nakasone K."/>
            <person name="Takaki Y."/>
            <person name="Maeno G."/>
            <person name="Sasaki R."/>
            <person name="Masui N."/>
            <person name="Fuji F."/>
            <person name="Hirama C."/>
            <person name="Nakamura Y."/>
            <person name="Ogasawara N."/>
            <person name="Kuhara S."/>
            <person name="Horikoshi K."/>
        </authorList>
    </citation>
    <scope>NUCLEOTIDE SEQUENCE [LARGE SCALE GENOMIC DNA]</scope>
    <source>
        <strain>ATCC BAA-125 / DSM 18197 / FERM 7344 / JCM 9153 / C-125</strain>
    </source>
</reference>
<keyword id="KW-0067">ATP-binding</keyword>
<keyword id="KW-1015">Disulfide bond</keyword>
<keyword id="KW-0418">Kinase</keyword>
<keyword id="KW-0460">Magnesium</keyword>
<keyword id="KW-0547">Nucleotide-binding</keyword>
<keyword id="KW-1185">Reference proteome</keyword>
<keyword id="KW-0684">Rhamnose metabolism</keyword>
<keyword id="KW-0808">Transferase</keyword>
<feature type="chain" id="PRO_0000090528" description="Rhamnulokinase">
    <location>
        <begin position="1"/>
        <end position="467"/>
    </location>
</feature>
<feature type="active site" description="Proton acceptor" evidence="1">
    <location>
        <position position="236"/>
    </location>
</feature>
<feature type="binding site" evidence="1">
    <location>
        <begin position="11"/>
        <end position="15"/>
    </location>
    <ligand>
        <name>ATP</name>
        <dbReference type="ChEBI" id="CHEBI:30616"/>
    </ligand>
</feature>
<feature type="binding site" evidence="1">
    <location>
        <position position="78"/>
    </location>
    <ligand>
        <name>substrate</name>
    </ligand>
</feature>
<feature type="binding site" evidence="1">
    <location>
        <begin position="235"/>
        <end position="237"/>
    </location>
    <ligand>
        <name>substrate</name>
    </ligand>
</feature>
<feature type="binding site" evidence="1">
    <location>
        <position position="257"/>
    </location>
    <ligand>
        <name>ATP</name>
        <dbReference type="ChEBI" id="CHEBI:30616"/>
    </ligand>
</feature>
<feature type="binding site" evidence="1">
    <location>
        <position position="294"/>
    </location>
    <ligand>
        <name>substrate</name>
    </ligand>
</feature>
<feature type="binding site" evidence="1">
    <location>
        <position position="302"/>
    </location>
    <ligand>
        <name>ATP</name>
        <dbReference type="ChEBI" id="CHEBI:30616"/>
    </ligand>
</feature>
<feature type="binding site" evidence="1">
    <location>
        <position position="400"/>
    </location>
    <ligand>
        <name>ATP</name>
        <dbReference type="ChEBI" id="CHEBI:30616"/>
    </ligand>
</feature>
<feature type="disulfide bond" evidence="1">
    <location>
        <begin position="351"/>
        <end position="368"/>
    </location>
</feature>
<evidence type="ECO:0000255" key="1">
    <source>
        <dbReference type="HAMAP-Rule" id="MF_01535"/>
    </source>
</evidence>
<gene>
    <name evidence="1" type="primary">rhaB</name>
    <name type="ordered locus">BH1551</name>
</gene>
<name>RHAB_HALH5</name>